<reference key="1">
    <citation type="journal article" date="2000" name="Nucleic Acids Res.">
        <title>Complete genome sequence of the alkaliphilic bacterium Bacillus halodurans and genomic sequence comparison with Bacillus subtilis.</title>
        <authorList>
            <person name="Takami H."/>
            <person name="Nakasone K."/>
            <person name="Takaki Y."/>
            <person name="Maeno G."/>
            <person name="Sasaki R."/>
            <person name="Masui N."/>
            <person name="Fuji F."/>
            <person name="Hirama C."/>
            <person name="Nakamura Y."/>
            <person name="Ogasawara N."/>
            <person name="Kuhara S."/>
            <person name="Horikoshi K."/>
        </authorList>
    </citation>
    <scope>NUCLEOTIDE SEQUENCE [LARGE SCALE GENOMIC DNA]</scope>
    <source>
        <strain>ATCC BAA-125 / DSM 18197 / FERM 7344 / JCM 9153 / C-125</strain>
    </source>
</reference>
<name>SYT_HALH5</name>
<proteinExistence type="inferred from homology"/>
<protein>
    <recommendedName>
        <fullName evidence="1">Threonine--tRNA ligase</fullName>
        <ecNumber evidence="1">6.1.1.3</ecNumber>
    </recommendedName>
    <alternativeName>
        <fullName evidence="1">Threonyl-tRNA synthetase</fullName>
        <shortName evidence="1">ThrRS</shortName>
    </alternativeName>
</protein>
<accession>Q9K866</accession>
<evidence type="ECO:0000255" key="1">
    <source>
        <dbReference type="HAMAP-Rule" id="MF_00184"/>
    </source>
</evidence>
<evidence type="ECO:0000255" key="2">
    <source>
        <dbReference type="PROSITE-ProRule" id="PRU01228"/>
    </source>
</evidence>
<dbReference type="EC" id="6.1.1.3" evidence="1"/>
<dbReference type="EMBL" id="BA000004">
    <property type="protein sequence ID" value="BAB06860.1"/>
    <property type="molecule type" value="Genomic_DNA"/>
</dbReference>
<dbReference type="PIR" id="E84042">
    <property type="entry name" value="E84042"/>
</dbReference>
<dbReference type="RefSeq" id="WP_010899284.1">
    <property type="nucleotide sequence ID" value="NC_002570.2"/>
</dbReference>
<dbReference type="SMR" id="Q9K866"/>
<dbReference type="STRING" id="272558.gene:10729053"/>
<dbReference type="KEGG" id="bha:BH3141"/>
<dbReference type="eggNOG" id="COG0441">
    <property type="taxonomic scope" value="Bacteria"/>
</dbReference>
<dbReference type="HOGENOM" id="CLU_008554_0_1_9"/>
<dbReference type="OrthoDB" id="9802304at2"/>
<dbReference type="Proteomes" id="UP000001258">
    <property type="component" value="Chromosome"/>
</dbReference>
<dbReference type="GO" id="GO:0005737">
    <property type="term" value="C:cytoplasm"/>
    <property type="evidence" value="ECO:0007669"/>
    <property type="project" value="UniProtKB-SubCell"/>
</dbReference>
<dbReference type="GO" id="GO:0005524">
    <property type="term" value="F:ATP binding"/>
    <property type="evidence" value="ECO:0007669"/>
    <property type="project" value="UniProtKB-UniRule"/>
</dbReference>
<dbReference type="GO" id="GO:0140096">
    <property type="term" value="F:catalytic activity, acting on a protein"/>
    <property type="evidence" value="ECO:0007669"/>
    <property type="project" value="UniProtKB-ARBA"/>
</dbReference>
<dbReference type="GO" id="GO:0046872">
    <property type="term" value="F:metal ion binding"/>
    <property type="evidence" value="ECO:0007669"/>
    <property type="project" value="UniProtKB-KW"/>
</dbReference>
<dbReference type="GO" id="GO:0004829">
    <property type="term" value="F:threonine-tRNA ligase activity"/>
    <property type="evidence" value="ECO:0007669"/>
    <property type="project" value="UniProtKB-UniRule"/>
</dbReference>
<dbReference type="GO" id="GO:0016740">
    <property type="term" value="F:transferase activity"/>
    <property type="evidence" value="ECO:0007669"/>
    <property type="project" value="UniProtKB-ARBA"/>
</dbReference>
<dbReference type="GO" id="GO:0000049">
    <property type="term" value="F:tRNA binding"/>
    <property type="evidence" value="ECO:0007669"/>
    <property type="project" value="UniProtKB-KW"/>
</dbReference>
<dbReference type="GO" id="GO:0006435">
    <property type="term" value="P:threonyl-tRNA aminoacylation"/>
    <property type="evidence" value="ECO:0007669"/>
    <property type="project" value="UniProtKB-UniRule"/>
</dbReference>
<dbReference type="CDD" id="cd01667">
    <property type="entry name" value="TGS_ThrRS"/>
    <property type="match status" value="1"/>
</dbReference>
<dbReference type="CDD" id="cd00860">
    <property type="entry name" value="ThrRS_anticodon"/>
    <property type="match status" value="1"/>
</dbReference>
<dbReference type="CDD" id="cd00771">
    <property type="entry name" value="ThrRS_core"/>
    <property type="match status" value="1"/>
</dbReference>
<dbReference type="FunFam" id="3.10.20.30:FF:000005">
    <property type="entry name" value="Threonine--tRNA ligase"/>
    <property type="match status" value="1"/>
</dbReference>
<dbReference type="FunFam" id="3.30.54.20:FF:000002">
    <property type="entry name" value="Threonine--tRNA ligase"/>
    <property type="match status" value="1"/>
</dbReference>
<dbReference type="FunFam" id="3.30.930.10:FF:000002">
    <property type="entry name" value="Threonine--tRNA ligase"/>
    <property type="match status" value="1"/>
</dbReference>
<dbReference type="FunFam" id="3.40.50.800:FF:000001">
    <property type="entry name" value="Threonine--tRNA ligase"/>
    <property type="match status" value="1"/>
</dbReference>
<dbReference type="FunFam" id="3.30.980.10:FF:000005">
    <property type="entry name" value="Threonyl-tRNA synthetase, mitochondrial"/>
    <property type="match status" value="1"/>
</dbReference>
<dbReference type="Gene3D" id="3.10.20.30">
    <property type="match status" value="1"/>
</dbReference>
<dbReference type="Gene3D" id="3.30.54.20">
    <property type="match status" value="1"/>
</dbReference>
<dbReference type="Gene3D" id="3.40.50.800">
    <property type="entry name" value="Anticodon-binding domain"/>
    <property type="match status" value="1"/>
</dbReference>
<dbReference type="Gene3D" id="3.30.930.10">
    <property type="entry name" value="Bira Bifunctional Protein, Domain 2"/>
    <property type="match status" value="1"/>
</dbReference>
<dbReference type="Gene3D" id="3.30.980.10">
    <property type="entry name" value="Threonyl-trna Synthetase, Chain A, domain 2"/>
    <property type="match status" value="1"/>
</dbReference>
<dbReference type="HAMAP" id="MF_00184">
    <property type="entry name" value="Thr_tRNA_synth"/>
    <property type="match status" value="1"/>
</dbReference>
<dbReference type="InterPro" id="IPR002314">
    <property type="entry name" value="aa-tRNA-synt_IIb"/>
</dbReference>
<dbReference type="InterPro" id="IPR006195">
    <property type="entry name" value="aa-tRNA-synth_II"/>
</dbReference>
<dbReference type="InterPro" id="IPR045864">
    <property type="entry name" value="aa-tRNA-synth_II/BPL/LPL"/>
</dbReference>
<dbReference type="InterPro" id="IPR004154">
    <property type="entry name" value="Anticodon-bd"/>
</dbReference>
<dbReference type="InterPro" id="IPR036621">
    <property type="entry name" value="Anticodon-bd_dom_sf"/>
</dbReference>
<dbReference type="InterPro" id="IPR012675">
    <property type="entry name" value="Beta-grasp_dom_sf"/>
</dbReference>
<dbReference type="InterPro" id="IPR004095">
    <property type="entry name" value="TGS"/>
</dbReference>
<dbReference type="InterPro" id="IPR012676">
    <property type="entry name" value="TGS-like"/>
</dbReference>
<dbReference type="InterPro" id="IPR002320">
    <property type="entry name" value="Thr-tRNA-ligase_IIa"/>
</dbReference>
<dbReference type="InterPro" id="IPR018163">
    <property type="entry name" value="Thr/Ala-tRNA-synth_IIc_edit"/>
</dbReference>
<dbReference type="InterPro" id="IPR047246">
    <property type="entry name" value="ThrRS_anticodon"/>
</dbReference>
<dbReference type="InterPro" id="IPR033728">
    <property type="entry name" value="ThrRS_core"/>
</dbReference>
<dbReference type="InterPro" id="IPR012947">
    <property type="entry name" value="tRNA_SAD"/>
</dbReference>
<dbReference type="NCBIfam" id="TIGR00418">
    <property type="entry name" value="thrS"/>
    <property type="match status" value="1"/>
</dbReference>
<dbReference type="PANTHER" id="PTHR11451:SF56">
    <property type="entry name" value="THREONINE--TRNA LIGASE 1"/>
    <property type="match status" value="1"/>
</dbReference>
<dbReference type="PANTHER" id="PTHR11451">
    <property type="entry name" value="THREONINE-TRNA LIGASE"/>
    <property type="match status" value="1"/>
</dbReference>
<dbReference type="Pfam" id="PF03129">
    <property type="entry name" value="HGTP_anticodon"/>
    <property type="match status" value="1"/>
</dbReference>
<dbReference type="Pfam" id="PF02824">
    <property type="entry name" value="TGS"/>
    <property type="match status" value="1"/>
</dbReference>
<dbReference type="Pfam" id="PF00587">
    <property type="entry name" value="tRNA-synt_2b"/>
    <property type="match status" value="1"/>
</dbReference>
<dbReference type="Pfam" id="PF07973">
    <property type="entry name" value="tRNA_SAD"/>
    <property type="match status" value="1"/>
</dbReference>
<dbReference type="PRINTS" id="PR01047">
    <property type="entry name" value="TRNASYNTHTHR"/>
</dbReference>
<dbReference type="SMART" id="SM00863">
    <property type="entry name" value="tRNA_SAD"/>
    <property type="match status" value="1"/>
</dbReference>
<dbReference type="SUPFAM" id="SSF52954">
    <property type="entry name" value="Class II aaRS ABD-related"/>
    <property type="match status" value="1"/>
</dbReference>
<dbReference type="SUPFAM" id="SSF55681">
    <property type="entry name" value="Class II aaRS and biotin synthetases"/>
    <property type="match status" value="1"/>
</dbReference>
<dbReference type="SUPFAM" id="SSF81271">
    <property type="entry name" value="TGS-like"/>
    <property type="match status" value="1"/>
</dbReference>
<dbReference type="SUPFAM" id="SSF55186">
    <property type="entry name" value="ThrRS/AlaRS common domain"/>
    <property type="match status" value="1"/>
</dbReference>
<dbReference type="PROSITE" id="PS50862">
    <property type="entry name" value="AA_TRNA_LIGASE_II"/>
    <property type="match status" value="1"/>
</dbReference>
<dbReference type="PROSITE" id="PS51880">
    <property type="entry name" value="TGS"/>
    <property type="match status" value="1"/>
</dbReference>
<feature type="chain" id="PRO_0000100937" description="Threonine--tRNA ligase">
    <location>
        <begin position="1"/>
        <end position="645"/>
    </location>
</feature>
<feature type="domain" description="TGS" evidence="2">
    <location>
        <begin position="3"/>
        <end position="64"/>
    </location>
</feature>
<feature type="region of interest" description="Catalytic" evidence="1">
    <location>
        <begin position="247"/>
        <end position="544"/>
    </location>
</feature>
<feature type="binding site" evidence="1">
    <location>
        <position position="340"/>
    </location>
    <ligand>
        <name>Zn(2+)</name>
        <dbReference type="ChEBI" id="CHEBI:29105"/>
    </ligand>
</feature>
<feature type="binding site" evidence="1">
    <location>
        <position position="391"/>
    </location>
    <ligand>
        <name>Zn(2+)</name>
        <dbReference type="ChEBI" id="CHEBI:29105"/>
    </ligand>
</feature>
<feature type="binding site" evidence="1">
    <location>
        <position position="521"/>
    </location>
    <ligand>
        <name>Zn(2+)</name>
        <dbReference type="ChEBI" id="CHEBI:29105"/>
    </ligand>
</feature>
<organism>
    <name type="scientific">Halalkalibacterium halodurans (strain ATCC BAA-125 / DSM 18197 / FERM 7344 / JCM 9153 / C-125)</name>
    <name type="common">Bacillus halodurans</name>
    <dbReference type="NCBI Taxonomy" id="272558"/>
    <lineage>
        <taxon>Bacteria</taxon>
        <taxon>Bacillati</taxon>
        <taxon>Bacillota</taxon>
        <taxon>Bacilli</taxon>
        <taxon>Bacillales</taxon>
        <taxon>Bacillaceae</taxon>
        <taxon>Halalkalibacterium (ex Joshi et al. 2022)</taxon>
    </lineage>
</organism>
<sequence>MADMINITFPDGAVKEFPKGTTTAEIAGSISPGLKKKALAGMLDGTLLDLNTPIEQDGTITIVTPESDEALEVLRHSTAHVMAQALKRLFKDRNVKLGVGPVIEGGFYYDVDMDESLTPEDLPKIEKEMKKIIGENLPIERVVVSREEALARYEEVGDPYKIELINDLPEDETITIYEQGEFFDLCRGVHVPSTGKLKEFKLLNLAGAYWRGDSSNKMLQRIYGTAFFKKADLDEHLRLLEEAKERDHRKLGKELGIFALSQKVGQGLPLWLPKGATIRRIIERYIVDKEEKLGYQHVYTPVLASSELYKTSGHWDHYKDDMFPTMEMENEELVLRPMNCPHHMMVYKTEMRSYRQLPLRIAELGLMHRYEMSGAVSGLQRVRGMTLNDAHIFCRPDQIKDEFVRVVRLIQAVYEDFGLKNYSFRLSYRDPEDKEKYFDDDNMWNKAQGMLKEAMDELELEYFEAEGEAAFYGPKLDVQVRTALGKDETLSTVQLDFLLPERFDLTYVGEDGQPHRPVVVHRGVVSTMERFVAFLLEEYKGAFPTWLAPVQVQVIPVSPEAHLEYAKNVQETLQQAGIRVEIDERDEKIGYKIREAQMQKIPYMLVLGDKEVEANGVNVRKYGEKDSSSMGLDEFVRHVAREAKK</sequence>
<comment type="function">
    <text evidence="1">Catalyzes the attachment of threonine to tRNA(Thr) in a two-step reaction: L-threonine is first activated by ATP to form Thr-AMP and then transferred to the acceptor end of tRNA(Thr). Also edits incorrectly charged L-seryl-tRNA(Thr).</text>
</comment>
<comment type="catalytic activity">
    <reaction evidence="1">
        <text>tRNA(Thr) + L-threonine + ATP = L-threonyl-tRNA(Thr) + AMP + diphosphate + H(+)</text>
        <dbReference type="Rhea" id="RHEA:24624"/>
        <dbReference type="Rhea" id="RHEA-COMP:9670"/>
        <dbReference type="Rhea" id="RHEA-COMP:9704"/>
        <dbReference type="ChEBI" id="CHEBI:15378"/>
        <dbReference type="ChEBI" id="CHEBI:30616"/>
        <dbReference type="ChEBI" id="CHEBI:33019"/>
        <dbReference type="ChEBI" id="CHEBI:57926"/>
        <dbReference type="ChEBI" id="CHEBI:78442"/>
        <dbReference type="ChEBI" id="CHEBI:78534"/>
        <dbReference type="ChEBI" id="CHEBI:456215"/>
        <dbReference type="EC" id="6.1.1.3"/>
    </reaction>
</comment>
<comment type="cofactor">
    <cofactor evidence="1">
        <name>Zn(2+)</name>
        <dbReference type="ChEBI" id="CHEBI:29105"/>
    </cofactor>
    <text evidence="1">Binds 1 zinc ion per subunit.</text>
</comment>
<comment type="subunit">
    <text evidence="1">Homodimer.</text>
</comment>
<comment type="subcellular location">
    <subcellularLocation>
        <location evidence="1">Cytoplasm</location>
    </subcellularLocation>
</comment>
<comment type="similarity">
    <text evidence="1">Belongs to the class-II aminoacyl-tRNA synthetase family.</text>
</comment>
<gene>
    <name evidence="1" type="primary">thrS</name>
    <name type="ordered locus">BH3141</name>
</gene>
<keyword id="KW-0030">Aminoacyl-tRNA synthetase</keyword>
<keyword id="KW-0067">ATP-binding</keyword>
<keyword id="KW-0963">Cytoplasm</keyword>
<keyword id="KW-0436">Ligase</keyword>
<keyword id="KW-0479">Metal-binding</keyword>
<keyword id="KW-0547">Nucleotide-binding</keyword>
<keyword id="KW-0648">Protein biosynthesis</keyword>
<keyword id="KW-1185">Reference proteome</keyword>
<keyword id="KW-0694">RNA-binding</keyword>
<keyword id="KW-0820">tRNA-binding</keyword>
<keyword id="KW-0862">Zinc</keyword>